<gene>
    <name evidence="1" type="primary">hemH</name>
    <name type="ordered locus">E2348C_0410</name>
</gene>
<comment type="function">
    <text evidence="1">Catalyzes the ferrous insertion into protoporphyrin IX.</text>
</comment>
<comment type="catalytic activity">
    <reaction evidence="1">
        <text>heme b + 2 H(+) = protoporphyrin IX + Fe(2+)</text>
        <dbReference type="Rhea" id="RHEA:22584"/>
        <dbReference type="ChEBI" id="CHEBI:15378"/>
        <dbReference type="ChEBI" id="CHEBI:29033"/>
        <dbReference type="ChEBI" id="CHEBI:57306"/>
        <dbReference type="ChEBI" id="CHEBI:60344"/>
        <dbReference type="EC" id="4.98.1.1"/>
    </reaction>
</comment>
<comment type="pathway">
    <text evidence="1">Porphyrin-containing compound metabolism; protoheme biosynthesis; protoheme from protoporphyrin-IX: step 1/1.</text>
</comment>
<comment type="subunit">
    <text evidence="1">Monomer.</text>
</comment>
<comment type="subcellular location">
    <subcellularLocation>
        <location evidence="1">Cytoplasm</location>
    </subcellularLocation>
</comment>
<comment type="similarity">
    <text evidence="1">Belongs to the ferrochelatase family.</text>
</comment>
<sequence>MRQTKTGILLANLGTPDAPTPEAVKRYLKQFLSDRRVVDTSRLLWWPLLRGVILPLRSPRVAKLYASVWMEGGSPLMVYSRQQQQALAQRLPETPVALGMSYGSPSLESAVDELLAEHVDHIVVLPLYPQYSCSTVGAVWDELARILARKRSIPGISFIRDYADNHDYINALANSVRASFAKHGEPDLLLLSYHGIPQRYADEGDDYPQRCRTTTRELASALEMAPEKVMMTFQSRFGREPWLMPYTDETLKMLGEKGVGHIQVMCPGFAADCLETLEEIAEQNREVFLGAGGKKYEYIPALNATSEHIEMMANLVAAYR</sequence>
<keyword id="KW-0963">Cytoplasm</keyword>
<keyword id="KW-0350">Heme biosynthesis</keyword>
<keyword id="KW-0408">Iron</keyword>
<keyword id="KW-0456">Lyase</keyword>
<keyword id="KW-0479">Metal-binding</keyword>
<keyword id="KW-0627">Porphyrin biosynthesis</keyword>
<keyword id="KW-1185">Reference proteome</keyword>
<dbReference type="EC" id="4.98.1.1" evidence="1"/>
<dbReference type="EMBL" id="FM180568">
    <property type="protein sequence ID" value="CAS07958.1"/>
    <property type="molecule type" value="Genomic_DNA"/>
</dbReference>
<dbReference type="RefSeq" id="WP_001250115.1">
    <property type="nucleotide sequence ID" value="NC_011601.1"/>
</dbReference>
<dbReference type="SMR" id="B7UKF5"/>
<dbReference type="KEGG" id="ecg:E2348C_0410"/>
<dbReference type="HOGENOM" id="CLU_018884_0_0_6"/>
<dbReference type="UniPathway" id="UPA00252">
    <property type="reaction ID" value="UER00325"/>
</dbReference>
<dbReference type="Proteomes" id="UP000008205">
    <property type="component" value="Chromosome"/>
</dbReference>
<dbReference type="GO" id="GO:0005737">
    <property type="term" value="C:cytoplasm"/>
    <property type="evidence" value="ECO:0007669"/>
    <property type="project" value="UniProtKB-SubCell"/>
</dbReference>
<dbReference type="GO" id="GO:0004325">
    <property type="term" value="F:ferrochelatase activity"/>
    <property type="evidence" value="ECO:0007669"/>
    <property type="project" value="UniProtKB-UniRule"/>
</dbReference>
<dbReference type="GO" id="GO:0046872">
    <property type="term" value="F:metal ion binding"/>
    <property type="evidence" value="ECO:0007669"/>
    <property type="project" value="UniProtKB-KW"/>
</dbReference>
<dbReference type="GO" id="GO:0006783">
    <property type="term" value="P:heme biosynthetic process"/>
    <property type="evidence" value="ECO:0007669"/>
    <property type="project" value="UniProtKB-UniRule"/>
</dbReference>
<dbReference type="CDD" id="cd00419">
    <property type="entry name" value="Ferrochelatase_C"/>
    <property type="match status" value="1"/>
</dbReference>
<dbReference type="CDD" id="cd03411">
    <property type="entry name" value="Ferrochelatase_N"/>
    <property type="match status" value="1"/>
</dbReference>
<dbReference type="FunFam" id="3.40.50.1400:FF:000004">
    <property type="entry name" value="Ferrochelatase"/>
    <property type="match status" value="1"/>
</dbReference>
<dbReference type="Gene3D" id="3.40.50.1400">
    <property type="match status" value="2"/>
</dbReference>
<dbReference type="HAMAP" id="MF_00323">
    <property type="entry name" value="Ferrochelatase"/>
    <property type="match status" value="1"/>
</dbReference>
<dbReference type="InterPro" id="IPR001015">
    <property type="entry name" value="Ferrochelatase"/>
</dbReference>
<dbReference type="InterPro" id="IPR019772">
    <property type="entry name" value="Ferrochelatase_AS"/>
</dbReference>
<dbReference type="InterPro" id="IPR033644">
    <property type="entry name" value="Ferrochelatase_C"/>
</dbReference>
<dbReference type="InterPro" id="IPR033659">
    <property type="entry name" value="Ferrochelatase_N"/>
</dbReference>
<dbReference type="NCBIfam" id="TIGR00109">
    <property type="entry name" value="hemH"/>
    <property type="match status" value="1"/>
</dbReference>
<dbReference type="PANTHER" id="PTHR11108">
    <property type="entry name" value="FERROCHELATASE"/>
    <property type="match status" value="1"/>
</dbReference>
<dbReference type="PANTHER" id="PTHR11108:SF1">
    <property type="entry name" value="FERROCHELATASE, MITOCHONDRIAL"/>
    <property type="match status" value="1"/>
</dbReference>
<dbReference type="Pfam" id="PF00762">
    <property type="entry name" value="Ferrochelatase"/>
    <property type="match status" value="1"/>
</dbReference>
<dbReference type="SUPFAM" id="SSF53800">
    <property type="entry name" value="Chelatase"/>
    <property type="match status" value="1"/>
</dbReference>
<dbReference type="PROSITE" id="PS00534">
    <property type="entry name" value="FERROCHELATASE"/>
    <property type="match status" value="1"/>
</dbReference>
<evidence type="ECO:0000255" key="1">
    <source>
        <dbReference type="HAMAP-Rule" id="MF_00323"/>
    </source>
</evidence>
<feature type="chain" id="PRO_1000189984" description="Ferrochelatase">
    <location>
        <begin position="1"/>
        <end position="320"/>
    </location>
</feature>
<feature type="binding site" evidence="1">
    <location>
        <position position="194"/>
    </location>
    <ligand>
        <name>Fe cation</name>
        <dbReference type="ChEBI" id="CHEBI:24875"/>
    </ligand>
</feature>
<feature type="binding site" evidence="1">
    <location>
        <position position="275"/>
    </location>
    <ligand>
        <name>Fe cation</name>
        <dbReference type="ChEBI" id="CHEBI:24875"/>
    </ligand>
</feature>
<proteinExistence type="inferred from homology"/>
<organism>
    <name type="scientific">Escherichia coli O127:H6 (strain E2348/69 / EPEC)</name>
    <dbReference type="NCBI Taxonomy" id="574521"/>
    <lineage>
        <taxon>Bacteria</taxon>
        <taxon>Pseudomonadati</taxon>
        <taxon>Pseudomonadota</taxon>
        <taxon>Gammaproteobacteria</taxon>
        <taxon>Enterobacterales</taxon>
        <taxon>Enterobacteriaceae</taxon>
        <taxon>Escherichia</taxon>
    </lineage>
</organism>
<reference key="1">
    <citation type="journal article" date="2009" name="J. Bacteriol.">
        <title>Complete genome sequence and comparative genome analysis of enteropathogenic Escherichia coli O127:H6 strain E2348/69.</title>
        <authorList>
            <person name="Iguchi A."/>
            <person name="Thomson N.R."/>
            <person name="Ogura Y."/>
            <person name="Saunders D."/>
            <person name="Ooka T."/>
            <person name="Henderson I.R."/>
            <person name="Harris D."/>
            <person name="Asadulghani M."/>
            <person name="Kurokawa K."/>
            <person name="Dean P."/>
            <person name="Kenny B."/>
            <person name="Quail M.A."/>
            <person name="Thurston S."/>
            <person name="Dougan G."/>
            <person name="Hayashi T."/>
            <person name="Parkhill J."/>
            <person name="Frankel G."/>
        </authorList>
    </citation>
    <scope>NUCLEOTIDE SEQUENCE [LARGE SCALE GENOMIC DNA]</scope>
    <source>
        <strain>E2348/69 / EPEC</strain>
    </source>
</reference>
<name>HEMH_ECO27</name>
<protein>
    <recommendedName>
        <fullName evidence="1">Ferrochelatase</fullName>
        <ecNumber evidence="1">4.98.1.1</ecNumber>
    </recommendedName>
    <alternativeName>
        <fullName evidence="1">Heme synthase</fullName>
    </alternativeName>
    <alternativeName>
        <fullName evidence="1">Protoheme ferro-lyase</fullName>
    </alternativeName>
</protein>
<accession>B7UKF5</accession>